<gene>
    <name type="ORF">MCYG_07979</name>
</gene>
<dbReference type="EC" id="3.4.23.-"/>
<dbReference type="EMBL" id="DS995708">
    <property type="protein sequence ID" value="EEQ35160.1"/>
    <property type="molecule type" value="Genomic_DNA"/>
</dbReference>
<dbReference type="RefSeq" id="XP_002842896.1">
    <property type="nucleotide sequence ID" value="XM_002842850.1"/>
</dbReference>
<dbReference type="SMR" id="C5FZ57"/>
<dbReference type="STRING" id="554155.C5FZ57"/>
<dbReference type="MEROPS" id="A01.079"/>
<dbReference type="GeneID" id="9227569"/>
<dbReference type="VEuPathDB" id="FungiDB:MCYG_07979"/>
<dbReference type="eggNOG" id="KOG1339">
    <property type="taxonomic scope" value="Eukaryota"/>
</dbReference>
<dbReference type="HOGENOM" id="CLU_013253_0_0_1"/>
<dbReference type="OMA" id="NGVGEYE"/>
<dbReference type="OrthoDB" id="2747330at2759"/>
<dbReference type="Proteomes" id="UP000002035">
    <property type="component" value="Unassembled WGS sequence"/>
</dbReference>
<dbReference type="GO" id="GO:0005576">
    <property type="term" value="C:extracellular region"/>
    <property type="evidence" value="ECO:0007669"/>
    <property type="project" value="UniProtKB-SubCell"/>
</dbReference>
<dbReference type="GO" id="GO:0004190">
    <property type="term" value="F:aspartic-type endopeptidase activity"/>
    <property type="evidence" value="ECO:0007669"/>
    <property type="project" value="UniProtKB-KW"/>
</dbReference>
<dbReference type="GO" id="GO:0006508">
    <property type="term" value="P:proteolysis"/>
    <property type="evidence" value="ECO:0007669"/>
    <property type="project" value="UniProtKB-KW"/>
</dbReference>
<dbReference type="CDD" id="cd06097">
    <property type="entry name" value="Aspergillopepsin_like"/>
    <property type="match status" value="1"/>
</dbReference>
<dbReference type="FunFam" id="2.40.70.10:FF:000026">
    <property type="entry name" value="Endothiapepsin"/>
    <property type="match status" value="1"/>
</dbReference>
<dbReference type="Gene3D" id="2.40.70.10">
    <property type="entry name" value="Acid Proteases"/>
    <property type="match status" value="2"/>
</dbReference>
<dbReference type="InterPro" id="IPR001461">
    <property type="entry name" value="Aspartic_peptidase_A1"/>
</dbReference>
<dbReference type="InterPro" id="IPR001969">
    <property type="entry name" value="Aspartic_peptidase_AS"/>
</dbReference>
<dbReference type="InterPro" id="IPR034163">
    <property type="entry name" value="Aspergillopepsin-like_cat_dom"/>
</dbReference>
<dbReference type="InterPro" id="IPR033121">
    <property type="entry name" value="PEPTIDASE_A1"/>
</dbReference>
<dbReference type="InterPro" id="IPR021109">
    <property type="entry name" value="Peptidase_aspartic_dom_sf"/>
</dbReference>
<dbReference type="PANTHER" id="PTHR47966:SF23">
    <property type="entry name" value="ASPARTIC ENDOPEPTIDASE, PUTATIVE (AFU_ORTHOLOGUE AFUA_2G15950)-RELATED"/>
    <property type="match status" value="1"/>
</dbReference>
<dbReference type="PANTHER" id="PTHR47966">
    <property type="entry name" value="BETA-SITE APP-CLEAVING ENZYME, ISOFORM A-RELATED"/>
    <property type="match status" value="1"/>
</dbReference>
<dbReference type="Pfam" id="PF00026">
    <property type="entry name" value="Asp"/>
    <property type="match status" value="1"/>
</dbReference>
<dbReference type="PRINTS" id="PR00792">
    <property type="entry name" value="PEPSIN"/>
</dbReference>
<dbReference type="SUPFAM" id="SSF50630">
    <property type="entry name" value="Acid proteases"/>
    <property type="match status" value="1"/>
</dbReference>
<dbReference type="PROSITE" id="PS00141">
    <property type="entry name" value="ASP_PROTEASE"/>
    <property type="match status" value="2"/>
</dbReference>
<dbReference type="PROSITE" id="PS51767">
    <property type="entry name" value="PEPTIDASE_A1"/>
    <property type="match status" value="1"/>
</dbReference>
<comment type="subcellular location">
    <subcellularLocation>
        <location evidence="6">Secreted</location>
    </subcellularLocation>
</comment>
<comment type="similarity">
    <text evidence="6">Belongs to the peptidase A1 family.</text>
</comment>
<accession>C5FZ57</accession>
<feature type="signal peptide" evidence="2">
    <location>
        <begin position="1"/>
        <end position="17"/>
    </location>
</feature>
<feature type="propeptide" id="PRO_0000390770" description="Activation peptide" evidence="1">
    <location>
        <begin position="18"/>
        <end position="87"/>
    </location>
</feature>
<feature type="chain" id="PRO_0000390771" description="Putative aspergillopepsin A-like aspartic endopeptidase MCYG_07979">
    <location>
        <begin position="88"/>
        <end position="430"/>
    </location>
</feature>
<feature type="domain" description="Peptidase A1" evidence="3">
    <location>
        <begin position="109"/>
        <end position="427"/>
    </location>
</feature>
<feature type="region of interest" description="Disordered" evidence="5">
    <location>
        <begin position="59"/>
        <end position="105"/>
    </location>
</feature>
<feature type="compositionally biased region" description="Basic and acidic residues" evidence="5">
    <location>
        <begin position="87"/>
        <end position="98"/>
    </location>
</feature>
<feature type="active site" evidence="4">
    <location>
        <position position="125"/>
    </location>
</feature>
<feature type="active site" evidence="4">
    <location>
        <position position="314"/>
    </location>
</feature>
<feature type="glycosylation site" description="N-linked (GlcNAc...) asparagine" evidence="2">
    <location>
        <position position="306"/>
    </location>
</feature>
<feature type="glycosylation site" description="N-linked (GlcNAc...) asparagine" evidence="2">
    <location>
        <position position="352"/>
    </location>
</feature>
<evidence type="ECO:0000250" key="1"/>
<evidence type="ECO:0000255" key="2"/>
<evidence type="ECO:0000255" key="3">
    <source>
        <dbReference type="PROSITE-ProRule" id="PRU01103"/>
    </source>
</evidence>
<evidence type="ECO:0000255" key="4">
    <source>
        <dbReference type="PROSITE-ProRule" id="PRU10094"/>
    </source>
</evidence>
<evidence type="ECO:0000256" key="5">
    <source>
        <dbReference type="SAM" id="MobiDB-lite"/>
    </source>
</evidence>
<evidence type="ECO:0000305" key="6"/>
<keyword id="KW-0064">Aspartyl protease</keyword>
<keyword id="KW-0325">Glycoprotein</keyword>
<keyword id="KW-0378">Hydrolase</keyword>
<keyword id="KW-0645">Protease</keyword>
<keyword id="KW-1185">Reference proteome</keyword>
<keyword id="KW-0964">Secreted</keyword>
<keyword id="KW-0732">Signal</keyword>
<keyword id="KW-0865">Zymogen</keyword>
<sequence>MHLSSLLVAVLLPLALSKPTPRKKPGSFTVHLARRSEAEYARDGPTDLQRAYAKYGIPSTQGMDGYRPEPISRFQGNSKIAGGAPGAKDDGKDEKGEVENNPTSHDIQFLSPVTIGGQPFIMNFDTGSSDTWVMNTDMDDEEAKKDHHLYDPRKSKTYSKLDGLTFSIKYGDKSHASGPVITDVMDIGGATVRKQAIGLPTKVAASLANDKSSDGLVGLAMNKLNTVRPDKQKTFFENLAEDLDEPVFTAQLRKGKMGSYEFGAIDKTKYAGDLVNVPVNNKNGFWEISSALYSVGQLDKIQKVENGTGTAILDTGTTLLILDEEVVKAYYAQVKGARYDASRYAGWVYPCNASMPSLFLAVGHDHMAIIPSSLLTFQNYGPGPDGTDVCYGGLQSNNAGGIQILGDVFFKALFVVFDYRGPSVSLAPHA</sequence>
<proteinExistence type="inferred from homology"/>
<protein>
    <recommendedName>
        <fullName>Putative aspergillopepsin A-like aspartic endopeptidase MCYG_07979</fullName>
        <ecNumber>3.4.23.-</ecNumber>
    </recommendedName>
</protein>
<reference key="1">
    <citation type="journal article" date="2012" name="MBio">
        <title>Comparative genome analysis of Trichophyton rubrum and related dermatophytes reveals candidate genes involved in infection.</title>
        <authorList>
            <person name="Martinez D.A."/>
            <person name="Oliver B.G."/>
            <person name="Graeser Y."/>
            <person name="Goldberg J.M."/>
            <person name="Li W."/>
            <person name="Martinez-Rossi N.M."/>
            <person name="Monod M."/>
            <person name="Shelest E."/>
            <person name="Barton R.C."/>
            <person name="Birch E."/>
            <person name="Brakhage A.A."/>
            <person name="Chen Z."/>
            <person name="Gurr S.J."/>
            <person name="Heiman D."/>
            <person name="Heitman J."/>
            <person name="Kosti I."/>
            <person name="Rossi A."/>
            <person name="Saif S."/>
            <person name="Samalova M."/>
            <person name="Saunders C.W."/>
            <person name="Shea T."/>
            <person name="Summerbell R.C."/>
            <person name="Xu J."/>
            <person name="Young S."/>
            <person name="Zeng Q."/>
            <person name="Birren B.W."/>
            <person name="Cuomo C.A."/>
            <person name="White T.C."/>
        </authorList>
    </citation>
    <scope>NUCLEOTIDE SEQUENCE [LARGE SCALE GENOMIC DNA]</scope>
    <source>
        <strain>ATCC MYA-4605 / CBS 113480</strain>
    </source>
</reference>
<organism>
    <name type="scientific">Arthroderma otae (strain ATCC MYA-4605 / CBS 113480)</name>
    <name type="common">Microsporum canis</name>
    <dbReference type="NCBI Taxonomy" id="554155"/>
    <lineage>
        <taxon>Eukaryota</taxon>
        <taxon>Fungi</taxon>
        <taxon>Dikarya</taxon>
        <taxon>Ascomycota</taxon>
        <taxon>Pezizomycotina</taxon>
        <taxon>Eurotiomycetes</taxon>
        <taxon>Eurotiomycetidae</taxon>
        <taxon>Onygenales</taxon>
        <taxon>Arthrodermataceae</taxon>
        <taxon>Microsporum</taxon>
    </lineage>
</organism>
<name>Y7979_ARTOC</name>